<protein>
    <recommendedName>
        <fullName evidence="1">LexA repressor</fullName>
        <ecNumber evidence="1">3.4.21.88</ecNumber>
    </recommendedName>
</protein>
<gene>
    <name evidence="1" type="primary">lexA</name>
    <name type="ordered locus">RPB_2809</name>
</gene>
<organism>
    <name type="scientific">Rhodopseudomonas palustris (strain HaA2)</name>
    <dbReference type="NCBI Taxonomy" id="316058"/>
    <lineage>
        <taxon>Bacteria</taxon>
        <taxon>Pseudomonadati</taxon>
        <taxon>Pseudomonadota</taxon>
        <taxon>Alphaproteobacteria</taxon>
        <taxon>Hyphomicrobiales</taxon>
        <taxon>Nitrobacteraceae</taxon>
        <taxon>Rhodopseudomonas</taxon>
    </lineage>
</organism>
<accession>Q2IW99</accession>
<sequence>MLTRKQFELLKFINERLKEAGVPPSFDEMKDALDLRSKSGIHRLITALEERGFIRRLPNRARAIEVIKLPDLGGNSGARRGFTPSVIEGNLGKVRPPSPQHAEDDSDRNVAVPVMGRIAAGTPIEALQTRSHTISVPPDMLGSGEHYALEVRGDSMMDAGILDGDMALIQRNESADTGDIVVALIDEEEATLKRFRRRGASIALEPANSAYEVRILPPNRVRIQGKLIGLYRKY</sequence>
<keyword id="KW-0068">Autocatalytic cleavage</keyword>
<keyword id="KW-0227">DNA damage</keyword>
<keyword id="KW-0234">DNA repair</keyword>
<keyword id="KW-0235">DNA replication</keyword>
<keyword id="KW-0238">DNA-binding</keyword>
<keyword id="KW-0378">Hydrolase</keyword>
<keyword id="KW-1185">Reference proteome</keyword>
<keyword id="KW-0678">Repressor</keyword>
<keyword id="KW-0742">SOS response</keyword>
<keyword id="KW-0804">Transcription</keyword>
<keyword id="KW-0805">Transcription regulation</keyword>
<name>LEXA_RHOP2</name>
<dbReference type="EC" id="3.4.21.88" evidence="1"/>
<dbReference type="EMBL" id="CP000250">
    <property type="protein sequence ID" value="ABD07511.1"/>
    <property type="molecule type" value="Genomic_DNA"/>
</dbReference>
<dbReference type="RefSeq" id="WP_011441696.1">
    <property type="nucleotide sequence ID" value="NC_007778.1"/>
</dbReference>
<dbReference type="SMR" id="Q2IW99"/>
<dbReference type="STRING" id="316058.RPB_2809"/>
<dbReference type="MEROPS" id="S24.001"/>
<dbReference type="KEGG" id="rpb:RPB_2809"/>
<dbReference type="eggNOG" id="COG1974">
    <property type="taxonomic scope" value="Bacteria"/>
</dbReference>
<dbReference type="HOGENOM" id="CLU_066192_45_2_5"/>
<dbReference type="OrthoDB" id="9802364at2"/>
<dbReference type="Proteomes" id="UP000008809">
    <property type="component" value="Chromosome"/>
</dbReference>
<dbReference type="GO" id="GO:0003677">
    <property type="term" value="F:DNA binding"/>
    <property type="evidence" value="ECO:0007669"/>
    <property type="project" value="UniProtKB-UniRule"/>
</dbReference>
<dbReference type="GO" id="GO:0004252">
    <property type="term" value="F:serine-type endopeptidase activity"/>
    <property type="evidence" value="ECO:0007669"/>
    <property type="project" value="UniProtKB-UniRule"/>
</dbReference>
<dbReference type="GO" id="GO:0006281">
    <property type="term" value="P:DNA repair"/>
    <property type="evidence" value="ECO:0007669"/>
    <property type="project" value="UniProtKB-UniRule"/>
</dbReference>
<dbReference type="GO" id="GO:0006260">
    <property type="term" value="P:DNA replication"/>
    <property type="evidence" value="ECO:0007669"/>
    <property type="project" value="UniProtKB-UniRule"/>
</dbReference>
<dbReference type="GO" id="GO:0045892">
    <property type="term" value="P:negative regulation of DNA-templated transcription"/>
    <property type="evidence" value="ECO:0007669"/>
    <property type="project" value="UniProtKB-UniRule"/>
</dbReference>
<dbReference type="GO" id="GO:0006508">
    <property type="term" value="P:proteolysis"/>
    <property type="evidence" value="ECO:0007669"/>
    <property type="project" value="InterPro"/>
</dbReference>
<dbReference type="GO" id="GO:0009432">
    <property type="term" value="P:SOS response"/>
    <property type="evidence" value="ECO:0007669"/>
    <property type="project" value="UniProtKB-UniRule"/>
</dbReference>
<dbReference type="CDD" id="cd06529">
    <property type="entry name" value="S24_LexA-like"/>
    <property type="match status" value="1"/>
</dbReference>
<dbReference type="FunFam" id="1.10.10.10:FF:000102">
    <property type="entry name" value="LexA repressor"/>
    <property type="match status" value="1"/>
</dbReference>
<dbReference type="FunFam" id="2.10.109.10:FF:000001">
    <property type="entry name" value="LexA repressor"/>
    <property type="match status" value="1"/>
</dbReference>
<dbReference type="Gene3D" id="2.10.109.10">
    <property type="entry name" value="Umud Fragment, subunit A"/>
    <property type="match status" value="1"/>
</dbReference>
<dbReference type="Gene3D" id="1.10.10.10">
    <property type="entry name" value="Winged helix-like DNA-binding domain superfamily/Winged helix DNA-binding domain"/>
    <property type="match status" value="1"/>
</dbReference>
<dbReference type="HAMAP" id="MF_00015">
    <property type="entry name" value="LexA"/>
    <property type="match status" value="1"/>
</dbReference>
<dbReference type="InterPro" id="IPR006200">
    <property type="entry name" value="LexA"/>
</dbReference>
<dbReference type="InterPro" id="IPR039418">
    <property type="entry name" value="LexA-like"/>
</dbReference>
<dbReference type="InterPro" id="IPR036286">
    <property type="entry name" value="LexA/Signal_pep-like_sf"/>
</dbReference>
<dbReference type="InterPro" id="IPR006199">
    <property type="entry name" value="LexA_DNA-bd_dom"/>
</dbReference>
<dbReference type="InterPro" id="IPR050077">
    <property type="entry name" value="LexA_repressor"/>
</dbReference>
<dbReference type="InterPro" id="IPR006197">
    <property type="entry name" value="Peptidase_S24_LexA"/>
</dbReference>
<dbReference type="InterPro" id="IPR015927">
    <property type="entry name" value="Peptidase_S24_S26A/B/C"/>
</dbReference>
<dbReference type="InterPro" id="IPR036388">
    <property type="entry name" value="WH-like_DNA-bd_sf"/>
</dbReference>
<dbReference type="InterPro" id="IPR036390">
    <property type="entry name" value="WH_DNA-bd_sf"/>
</dbReference>
<dbReference type="NCBIfam" id="TIGR00498">
    <property type="entry name" value="lexA"/>
    <property type="match status" value="1"/>
</dbReference>
<dbReference type="PANTHER" id="PTHR33516">
    <property type="entry name" value="LEXA REPRESSOR"/>
    <property type="match status" value="1"/>
</dbReference>
<dbReference type="PANTHER" id="PTHR33516:SF2">
    <property type="entry name" value="LEXA REPRESSOR-RELATED"/>
    <property type="match status" value="1"/>
</dbReference>
<dbReference type="Pfam" id="PF01726">
    <property type="entry name" value="LexA_DNA_bind"/>
    <property type="match status" value="1"/>
</dbReference>
<dbReference type="Pfam" id="PF00717">
    <property type="entry name" value="Peptidase_S24"/>
    <property type="match status" value="1"/>
</dbReference>
<dbReference type="PRINTS" id="PR00726">
    <property type="entry name" value="LEXASERPTASE"/>
</dbReference>
<dbReference type="SUPFAM" id="SSF51306">
    <property type="entry name" value="LexA/Signal peptidase"/>
    <property type="match status" value="1"/>
</dbReference>
<dbReference type="SUPFAM" id="SSF46785">
    <property type="entry name" value="Winged helix' DNA-binding domain"/>
    <property type="match status" value="1"/>
</dbReference>
<evidence type="ECO:0000255" key="1">
    <source>
        <dbReference type="HAMAP-Rule" id="MF_00015"/>
    </source>
</evidence>
<evidence type="ECO:0000256" key="2">
    <source>
        <dbReference type="SAM" id="MobiDB-lite"/>
    </source>
</evidence>
<proteinExistence type="inferred from homology"/>
<feature type="chain" id="PRO_1000001325" description="LexA repressor">
    <location>
        <begin position="1"/>
        <end position="234"/>
    </location>
</feature>
<feature type="DNA-binding region" description="H-T-H motif" evidence="1">
    <location>
        <begin position="26"/>
        <end position="46"/>
    </location>
</feature>
<feature type="region of interest" description="Disordered" evidence="2">
    <location>
        <begin position="80"/>
        <end position="107"/>
    </location>
</feature>
<feature type="active site" description="For autocatalytic cleavage activity" evidence="1">
    <location>
        <position position="155"/>
    </location>
</feature>
<feature type="active site" description="For autocatalytic cleavage activity" evidence="1">
    <location>
        <position position="193"/>
    </location>
</feature>
<feature type="site" description="Cleavage; by autolysis" evidence="1">
    <location>
        <begin position="120"/>
        <end position="121"/>
    </location>
</feature>
<reference key="1">
    <citation type="submission" date="2006-01" db="EMBL/GenBank/DDBJ databases">
        <title>Complete sequence of Rhodopseudomonas palustris HaA2.</title>
        <authorList>
            <consortium name="US DOE Joint Genome Institute"/>
            <person name="Copeland A."/>
            <person name="Lucas S."/>
            <person name="Lapidus A."/>
            <person name="Barry K."/>
            <person name="Detter J.C."/>
            <person name="Glavina T."/>
            <person name="Hammon N."/>
            <person name="Israni S."/>
            <person name="Pitluck S."/>
            <person name="Chain P."/>
            <person name="Malfatti S."/>
            <person name="Shin M."/>
            <person name="Vergez L."/>
            <person name="Schmutz J."/>
            <person name="Larimer F."/>
            <person name="Land M."/>
            <person name="Hauser L."/>
            <person name="Pelletier D.A."/>
            <person name="Kyrpides N."/>
            <person name="Anderson I."/>
            <person name="Oda Y."/>
            <person name="Harwood C.S."/>
            <person name="Richardson P."/>
        </authorList>
    </citation>
    <scope>NUCLEOTIDE SEQUENCE [LARGE SCALE GENOMIC DNA]</scope>
    <source>
        <strain>HaA2</strain>
    </source>
</reference>
<comment type="function">
    <text evidence="1">Represses a number of genes involved in the response to DNA damage (SOS response), including recA and lexA. In the presence of single-stranded DNA, RecA interacts with LexA causing an autocatalytic cleavage which disrupts the DNA-binding part of LexA, leading to derepression of the SOS regulon and eventually DNA repair.</text>
</comment>
<comment type="catalytic activity">
    <reaction evidence="1">
        <text>Hydrolysis of Ala-|-Gly bond in repressor LexA.</text>
        <dbReference type="EC" id="3.4.21.88"/>
    </reaction>
</comment>
<comment type="subunit">
    <text evidence="1">Homodimer.</text>
</comment>
<comment type="similarity">
    <text evidence="1">Belongs to the peptidase S24 family.</text>
</comment>